<accession>Q9QY78</accession>
<comment type="function">
    <text evidence="2 3">Serine kinase that plays an essential role in the NF-kappa-B signaling pathway which is activated by multiple stimuli such as inflammatory cytokines, bacterial or viral products, DNA damages or other cellular stresses. Acts as a part of the canonical IKK complex in the conventional pathway of NF-kappa-B activation. Phosphorylates inhibitors of NF-kappa-B on 2 critical serine residues. These modifications allow polyubiquitination of the inhibitors and subsequent degradation by the proteasome. In turn, free NF-kappa-B is translocated into the nucleus and activates the transcription of hundreds of genes involved in immune response, growth control, or protection against apoptosis. In addition to the NF-kappa-B inhibitors, phosphorylates several other components of the signaling pathway including NEMO/IKBKG, NF-kappa-B subunits RELA and NFKB1, as well as IKK-related kinases TBK1 and IKBKE. IKK-related kinase phosphorylations may prevent the overproduction of inflammatory mediators since they exert a negative regulation on canonical IKKs. Phosphorylates FOXO3, mediating the TNF-dependent inactivation of this pro-apoptotic transcription factor. Also phosphorylates other substrates including NAA10, NCOA3, BCL10 and IRS1 (By similarity). Phosphorylates RIPK1 at 'Ser-25' which represses its kinase activity and consequently prevents TNF-mediated RIPK1-dependent cell death (By similarity). Phosphorylates the C-terminus of IRF5, stimulating IRF5 homodimerization and translocation into the nucleus (By similarity).</text>
</comment>
<comment type="catalytic activity">
    <reaction evidence="2">
        <text>L-seryl-[I-kappa-B protein] + ATP = O-phospho-L-seryl-[I-kappa-B protein] + ADP + H(+)</text>
        <dbReference type="Rhea" id="RHEA:19073"/>
        <dbReference type="Rhea" id="RHEA-COMP:13698"/>
        <dbReference type="Rhea" id="RHEA-COMP:13699"/>
        <dbReference type="ChEBI" id="CHEBI:15378"/>
        <dbReference type="ChEBI" id="CHEBI:29999"/>
        <dbReference type="ChEBI" id="CHEBI:30616"/>
        <dbReference type="ChEBI" id="CHEBI:83421"/>
        <dbReference type="ChEBI" id="CHEBI:456216"/>
        <dbReference type="EC" id="2.7.11.10"/>
    </reaction>
</comment>
<comment type="catalytic activity">
    <reaction evidence="2">
        <text>L-seryl-[protein] + ATP = O-phospho-L-seryl-[protein] + ADP + H(+)</text>
        <dbReference type="Rhea" id="RHEA:17989"/>
        <dbReference type="Rhea" id="RHEA-COMP:9863"/>
        <dbReference type="Rhea" id="RHEA-COMP:11604"/>
        <dbReference type="ChEBI" id="CHEBI:15378"/>
        <dbReference type="ChEBI" id="CHEBI:29999"/>
        <dbReference type="ChEBI" id="CHEBI:30616"/>
        <dbReference type="ChEBI" id="CHEBI:83421"/>
        <dbReference type="ChEBI" id="CHEBI:456216"/>
        <dbReference type="EC" id="2.7.11.1"/>
    </reaction>
</comment>
<comment type="catalytic activity">
    <reaction evidence="2">
        <text>L-threonyl-[protein] + ATP = O-phospho-L-threonyl-[protein] + ADP + H(+)</text>
        <dbReference type="Rhea" id="RHEA:46608"/>
        <dbReference type="Rhea" id="RHEA-COMP:11060"/>
        <dbReference type="Rhea" id="RHEA-COMP:11605"/>
        <dbReference type="ChEBI" id="CHEBI:15378"/>
        <dbReference type="ChEBI" id="CHEBI:30013"/>
        <dbReference type="ChEBI" id="CHEBI:30616"/>
        <dbReference type="ChEBI" id="CHEBI:61977"/>
        <dbReference type="ChEBI" id="CHEBI:456216"/>
        <dbReference type="EC" id="2.7.11.1"/>
    </reaction>
</comment>
<comment type="subunit">
    <text evidence="2 3 7 8">Component of the I-kappa-B-kinase (IKK) core complex consisting of CHUK, IKBKB and IKBKG; probably four alpha/CHUK-beta/IKBKB dimers are associated with four gamma/IKBKG subunits. The IKK core complex seems to associate with regulatory or adapter proteins to form a IKK-signalosome holo-complex. The IKK complex associates with TERF2IP/RAP1, leading to promote IKK-mediated phosphorylation of RELA/p65. Part of a complex composed of NCOA2, NCOA3, CHUK/IKKA, IKBKB, IKBKG and CREBBP. Part of a 70-90 kDa complex at least consisting of CHUK/IKKA, IKBKB, NFKBIA, RELA, ELP1 and MAP3K14. Found in a membrane raft complex, at least composed of BCL10, CARD11, DPP4 and IKBKB (By similarity). Interacts with SQSTM1 through PRKCZ or PRKCI (PubMed:16079148). Forms an NGF-induced complex with IKBKB, PRKCI and TRAF6 (PubMed:16079148). May interact with MAVS/IPS1. Interacts with NALP2. Interacts with TICAM1. Interacts with FAF1; the interaction disrupts the IKK complex formation. Interacts with ATM. Part of a ternary complex consisting of TANK, IKBKB and IKBKG. Interacts with NIBP; the interaction is direct. Interacts with ARRB1 and ARRB2. Interacts with TRIM21. Interacts with NLRC5; prevents IKBKB phosphorylation and kinase activity. Interacts with PDPK1. Interacts with EIF2AK2/PKR. The phosphorylated form interacts with PPM1A and PPM1B. Interacts with ZNF268 isoform 2; the interaction is further increased in a TNF-alpha-dependent manner. Interacts with IKBKE. Interacts with ZC3H12A (By similarity). Interacts with AKAP13 (PubMed:23090968). Interacts with LRRC14; disrupts IKBKB-IKBKG interaction preventing I-kappa-B-kinase (IKK) core complex formation and leading to a decrease of IKBKB phosphorylation and NF-kappaB activation (By similarity). Interacts with SASH1 (By similarity). Interacts with ARFIP2 (By similarity). Interacts with FKBP5 (By similarity).</text>
</comment>
<comment type="interaction">
    <interactant intactId="EBI-1812464">
        <id>Q9QY78</id>
    </interactant>
    <interactant intactId="EBI-1573765">
        <id>O70377</id>
        <label>Snap23</label>
    </interactant>
    <organismsDiffer>false</organismsDiffer>
    <experiments>2</experiments>
</comment>
<comment type="subcellular location">
    <subcellularLocation>
        <location evidence="2">Cytoplasm</location>
    </subcellularLocation>
    <subcellularLocation>
        <location evidence="2">Nucleus</location>
    </subcellularLocation>
    <subcellularLocation>
        <location evidence="2">Membrane raft</location>
    </subcellularLocation>
    <text evidence="2">Colocalized with DPP4 in membrane rafts.</text>
</comment>
<comment type="domain">
    <text evidence="2">The kinase domain is located in the N-terminal region. The leucine zipper is important to allow homo- and hetero-dimerization. At the C-terminal region is located the region responsible for the interaction with NEMO/IKBKG.</text>
</comment>
<comment type="PTM">
    <text evidence="2">Upon cytokine stimulation, phosphorylated on Ser-177 and Ser-181 by MEKK1 and/or MAP3K14/NIK as well as TBK1 and PRKCZ; which enhances activity. Phosphorylated by MAP3K7/TAK1 in response to NOD1 and NOD2 signaling, promoting activation and phosphorylation of NF-kappa-B inhibitors, leading to NF-kappa-B activation. Once activated, autophosphorylates on the C-terminal serine cluster; which decreases activity and prevents prolonged activation of the inflammatory response. Phosphorylated by the IKK-related kinases TBK1 and IKBKE, which is associated with reduced CHUK/IKKA and IKBKB activity and NF-kappa-B-dependent gene transcription. Dephosphorylated at Ser-177 and Ser-181 by PPM1A and PPM1B.</text>
</comment>
<comment type="PTM">
    <text evidence="2">Ubiquitinated. Monoubiquitination involves TRIM21 that leads to inhibition of Tax-induced NF-kappa-B signaling. 'Ser-163' may not serve as a monoubiquitination site. Ubiquitination on 'Ser-163' may modulate phosphorylation on C-terminal serine residues.</text>
</comment>
<comment type="PTM">
    <text evidence="2">Hydroxylated by PHD1/EGLN2, loss of hydroxylation under hypoxic conditions results in activation of NF-kappa-B.</text>
</comment>
<comment type="similarity">
    <text evidence="4">Belongs to the protein kinase superfamily. Ser/Thr protein kinase family. I-kappa-B kinase subfamily.</text>
</comment>
<dbReference type="EC" id="2.7.11.10"/>
<dbReference type="EC" id="2.7.11.1" evidence="2"/>
<dbReference type="EMBL" id="AF115282">
    <property type="protein sequence ID" value="AAF21978.1"/>
    <property type="molecule type" value="mRNA"/>
</dbReference>
<dbReference type="RefSeq" id="NP_445807.2">
    <property type="nucleotide sequence ID" value="NM_053355.2"/>
</dbReference>
<dbReference type="SMR" id="Q9QY78"/>
<dbReference type="BioGRID" id="249911">
    <property type="interactions" value="2"/>
</dbReference>
<dbReference type="CORUM" id="Q9QY78"/>
<dbReference type="FunCoup" id="Q9QY78">
    <property type="interactions" value="2032"/>
</dbReference>
<dbReference type="IntAct" id="Q9QY78">
    <property type="interactions" value="4"/>
</dbReference>
<dbReference type="STRING" id="10116.ENSRNOP00000025851"/>
<dbReference type="ChEMBL" id="CHEMBL4524001"/>
<dbReference type="iPTMnet" id="Q9QY78"/>
<dbReference type="PhosphoSitePlus" id="Q9QY78"/>
<dbReference type="PaxDb" id="10116-ENSRNOP00000025851"/>
<dbReference type="GeneID" id="84351"/>
<dbReference type="KEGG" id="rno:84351"/>
<dbReference type="UCSC" id="RGD:621375">
    <property type="organism name" value="rat"/>
</dbReference>
<dbReference type="AGR" id="RGD:621375"/>
<dbReference type="CTD" id="3551"/>
<dbReference type="RGD" id="621375">
    <property type="gene designation" value="Ikbkb"/>
</dbReference>
<dbReference type="eggNOG" id="KOG4250">
    <property type="taxonomic scope" value="Eukaryota"/>
</dbReference>
<dbReference type="InParanoid" id="Q9QY78"/>
<dbReference type="OrthoDB" id="267381at2759"/>
<dbReference type="PhylomeDB" id="Q9QY78"/>
<dbReference type="BRENDA" id="2.7.11.10">
    <property type="organism ID" value="5301"/>
</dbReference>
<dbReference type="Reactome" id="R-RNO-1169091">
    <property type="pathway name" value="Activation of NF-kappaB in B cells"/>
</dbReference>
<dbReference type="Reactome" id="R-RNO-1810476">
    <property type="pathway name" value="RIP-mediated NFkB activation via ZBP1"/>
</dbReference>
<dbReference type="Reactome" id="R-RNO-202424">
    <property type="pathway name" value="Downstream TCR signaling"/>
</dbReference>
<dbReference type="Reactome" id="R-RNO-209543">
    <property type="pathway name" value="p75NTR recruits signalling complexes"/>
</dbReference>
<dbReference type="Reactome" id="R-RNO-209560">
    <property type="pathway name" value="NF-kB is activated and signals survival"/>
</dbReference>
<dbReference type="Reactome" id="R-RNO-2871837">
    <property type="pathway name" value="FCERI mediated NF-kB activation"/>
</dbReference>
<dbReference type="Reactome" id="R-RNO-445989">
    <property type="pathway name" value="TAK1-dependent IKK and NF-kappa-B activation"/>
</dbReference>
<dbReference type="Reactome" id="R-RNO-5357905">
    <property type="pathway name" value="Regulation of TNFR1 signaling"/>
</dbReference>
<dbReference type="Reactome" id="R-RNO-5357956">
    <property type="pathway name" value="TNFR1-induced NF-kappa-B signaling pathway"/>
</dbReference>
<dbReference type="Reactome" id="R-RNO-5607764">
    <property type="pathway name" value="CLEC7A (Dectin-1) signaling"/>
</dbReference>
<dbReference type="Reactome" id="R-RNO-9020702">
    <property type="pathway name" value="Interleukin-1 signaling"/>
</dbReference>
<dbReference type="Reactome" id="R-RNO-933542">
    <property type="pathway name" value="TRAF6 mediated NF-kB activation"/>
</dbReference>
<dbReference type="Reactome" id="R-RNO-937039">
    <property type="pathway name" value="IRAK1 recruits IKK complex"/>
</dbReference>
<dbReference type="Reactome" id="R-RNO-937041">
    <property type="pathway name" value="IKK complex recruitment mediated by RIP1"/>
</dbReference>
<dbReference type="Reactome" id="R-RNO-975144">
    <property type="pathway name" value="IRAK1 recruits IKK complex upon TLR7/8 or 9 stimulation"/>
</dbReference>
<dbReference type="Reactome" id="R-RNO-9758274">
    <property type="pathway name" value="Regulation of NF-kappa B signaling"/>
</dbReference>
<dbReference type="Reactome" id="R-RNO-9833482">
    <property type="pathway name" value="PKR-mediated signaling"/>
</dbReference>
<dbReference type="Reactome" id="R-RNO-9860276">
    <property type="pathway name" value="SLC15A4:TASL-dependent IRF5 activation"/>
</dbReference>
<dbReference type="Reactome" id="R-RNO-9860927">
    <property type="pathway name" value="Turbulent (oscillatory, disturbed) flow shear stress activates signaling by PIEZO1 and integrins in endothelial cells"/>
</dbReference>
<dbReference type="Reactome" id="R-RNO-9909505">
    <property type="pathway name" value="Modulation of host responses by IFN-stimulated genes"/>
</dbReference>
<dbReference type="PRO" id="PR:Q9QY78"/>
<dbReference type="Proteomes" id="UP000002494">
    <property type="component" value="Unplaced"/>
</dbReference>
<dbReference type="GO" id="GO:0035631">
    <property type="term" value="C:CD40 receptor complex"/>
    <property type="evidence" value="ECO:0000266"/>
    <property type="project" value="RGD"/>
</dbReference>
<dbReference type="GO" id="GO:0005737">
    <property type="term" value="C:cytoplasm"/>
    <property type="evidence" value="ECO:0000266"/>
    <property type="project" value="RGD"/>
</dbReference>
<dbReference type="GO" id="GO:0009898">
    <property type="term" value="C:cytoplasmic side of plasma membrane"/>
    <property type="evidence" value="ECO:0000266"/>
    <property type="project" value="RGD"/>
</dbReference>
<dbReference type="GO" id="GO:0008385">
    <property type="term" value="C:IkappaB kinase complex"/>
    <property type="evidence" value="ECO:0000314"/>
    <property type="project" value="RGD"/>
</dbReference>
<dbReference type="GO" id="GO:0045121">
    <property type="term" value="C:membrane raft"/>
    <property type="evidence" value="ECO:0007669"/>
    <property type="project" value="UniProtKB-SubCell"/>
</dbReference>
<dbReference type="GO" id="GO:0005634">
    <property type="term" value="C:nucleus"/>
    <property type="evidence" value="ECO:0007669"/>
    <property type="project" value="UniProtKB-SubCell"/>
</dbReference>
<dbReference type="GO" id="GO:0005524">
    <property type="term" value="F:ATP binding"/>
    <property type="evidence" value="ECO:0000314"/>
    <property type="project" value="RGD"/>
</dbReference>
<dbReference type="GO" id="GO:0042802">
    <property type="term" value="F:identical protein binding"/>
    <property type="evidence" value="ECO:0000266"/>
    <property type="project" value="RGD"/>
</dbReference>
<dbReference type="GO" id="GO:0008384">
    <property type="term" value="F:IkappaB kinase activity"/>
    <property type="evidence" value="ECO:0000266"/>
    <property type="project" value="RGD"/>
</dbReference>
<dbReference type="GO" id="GO:0046982">
    <property type="term" value="F:protein heterodimerization activity"/>
    <property type="evidence" value="ECO:0000266"/>
    <property type="project" value="RGD"/>
</dbReference>
<dbReference type="GO" id="GO:0042803">
    <property type="term" value="F:protein homodimerization activity"/>
    <property type="evidence" value="ECO:0000250"/>
    <property type="project" value="UniProtKB"/>
</dbReference>
<dbReference type="GO" id="GO:0004672">
    <property type="term" value="F:protein kinase activity"/>
    <property type="evidence" value="ECO:0000250"/>
    <property type="project" value="UniProtKB"/>
</dbReference>
<dbReference type="GO" id="GO:0019901">
    <property type="term" value="F:protein kinase binding"/>
    <property type="evidence" value="ECO:0000266"/>
    <property type="project" value="RGD"/>
</dbReference>
<dbReference type="GO" id="GO:0019903">
    <property type="term" value="F:protein phosphatase binding"/>
    <property type="evidence" value="ECO:0000266"/>
    <property type="project" value="RGD"/>
</dbReference>
<dbReference type="GO" id="GO:0106310">
    <property type="term" value="F:protein serine kinase activity"/>
    <property type="evidence" value="ECO:0007669"/>
    <property type="project" value="RHEA"/>
</dbReference>
<dbReference type="GO" id="GO:0004674">
    <property type="term" value="F:protein serine/threonine kinase activity"/>
    <property type="evidence" value="ECO:0000266"/>
    <property type="project" value="RGD"/>
</dbReference>
<dbReference type="GO" id="GO:0044877">
    <property type="term" value="F:protein-containing complex binding"/>
    <property type="evidence" value="ECO:0000353"/>
    <property type="project" value="RGD"/>
</dbReference>
<dbReference type="GO" id="GO:0097110">
    <property type="term" value="F:scaffold protein binding"/>
    <property type="evidence" value="ECO:0000266"/>
    <property type="project" value="RGD"/>
</dbReference>
<dbReference type="GO" id="GO:1990459">
    <property type="term" value="F:transferrin receptor binding"/>
    <property type="evidence" value="ECO:0000266"/>
    <property type="project" value="RGD"/>
</dbReference>
<dbReference type="GO" id="GO:0001782">
    <property type="term" value="P:B cell homeostasis"/>
    <property type="evidence" value="ECO:0000266"/>
    <property type="project" value="RGD"/>
</dbReference>
<dbReference type="GO" id="GO:0007249">
    <property type="term" value="P:canonical NF-kappaB signal transduction"/>
    <property type="evidence" value="ECO:0000266"/>
    <property type="project" value="RGD"/>
</dbReference>
<dbReference type="GO" id="GO:0071356">
    <property type="term" value="P:cellular response to tumor necrosis factor"/>
    <property type="evidence" value="ECO:0000250"/>
    <property type="project" value="UniProtKB"/>
</dbReference>
<dbReference type="GO" id="GO:0007229">
    <property type="term" value="P:integrin-mediated signaling pathway"/>
    <property type="evidence" value="ECO:0000266"/>
    <property type="project" value="RGD"/>
</dbReference>
<dbReference type="GO" id="GO:0070498">
    <property type="term" value="P:interleukin-1-mediated signaling pathway"/>
    <property type="evidence" value="ECO:0000266"/>
    <property type="project" value="RGD"/>
</dbReference>
<dbReference type="GO" id="GO:1903347">
    <property type="term" value="P:negative regulation of bicellular tight junction assembly"/>
    <property type="evidence" value="ECO:0000266"/>
    <property type="project" value="RGD"/>
</dbReference>
<dbReference type="GO" id="GO:1900016">
    <property type="term" value="P:negative regulation of cytokine production involved in inflammatory response"/>
    <property type="evidence" value="ECO:0000266"/>
    <property type="project" value="RGD"/>
</dbReference>
<dbReference type="GO" id="GO:0031175">
    <property type="term" value="P:neuron projection development"/>
    <property type="evidence" value="ECO:0000315"/>
    <property type="project" value="RGD"/>
</dbReference>
<dbReference type="GO" id="GO:0043123">
    <property type="term" value="P:positive regulation of canonical NF-kappaB signal transduction"/>
    <property type="evidence" value="ECO:0000266"/>
    <property type="project" value="RGD"/>
</dbReference>
<dbReference type="GO" id="GO:0008284">
    <property type="term" value="P:positive regulation of cell population proliferation"/>
    <property type="evidence" value="ECO:0000315"/>
    <property type="project" value="RGD"/>
</dbReference>
<dbReference type="GO" id="GO:0010976">
    <property type="term" value="P:positive regulation of neuron projection development"/>
    <property type="evidence" value="ECO:0000315"/>
    <property type="project" value="RGD"/>
</dbReference>
<dbReference type="GO" id="GO:0010765">
    <property type="term" value="P:positive regulation of sodium ion transport"/>
    <property type="evidence" value="ECO:0000266"/>
    <property type="project" value="RGD"/>
</dbReference>
<dbReference type="GO" id="GO:0045944">
    <property type="term" value="P:positive regulation of transcription by RNA polymerase II"/>
    <property type="evidence" value="ECO:0000250"/>
    <property type="project" value="UniProtKB"/>
</dbReference>
<dbReference type="GO" id="GO:0072659">
    <property type="term" value="P:protein localization to plasma membrane"/>
    <property type="evidence" value="ECO:0000266"/>
    <property type="project" value="RGD"/>
</dbReference>
<dbReference type="GO" id="GO:0051604">
    <property type="term" value="P:protein maturation"/>
    <property type="evidence" value="ECO:0000266"/>
    <property type="project" value="RGD"/>
</dbReference>
<dbReference type="GO" id="GO:1903140">
    <property type="term" value="P:regulation of establishment of endothelial barrier"/>
    <property type="evidence" value="ECO:0000266"/>
    <property type="project" value="RGD"/>
</dbReference>
<dbReference type="GO" id="GO:0061847">
    <property type="term" value="P:response to cholecystokinin"/>
    <property type="evidence" value="ECO:0000314"/>
    <property type="project" value="RGD"/>
</dbReference>
<dbReference type="GO" id="GO:0070542">
    <property type="term" value="P:response to fatty acid"/>
    <property type="evidence" value="ECO:0000270"/>
    <property type="project" value="RGD"/>
</dbReference>
<dbReference type="GO" id="GO:0032496">
    <property type="term" value="P:response to lipopolysaccharide"/>
    <property type="evidence" value="ECO:0000270"/>
    <property type="project" value="RGD"/>
</dbReference>
<dbReference type="GO" id="GO:0009636">
    <property type="term" value="P:response to toxic substance"/>
    <property type="evidence" value="ECO:0000270"/>
    <property type="project" value="RGD"/>
</dbReference>
<dbReference type="GO" id="GO:0009410">
    <property type="term" value="P:response to xenobiotic stimulus"/>
    <property type="evidence" value="ECO:0000270"/>
    <property type="project" value="RGD"/>
</dbReference>
<dbReference type="GO" id="GO:0023019">
    <property type="term" value="P:signal transduction involved in regulation of gene expression"/>
    <property type="evidence" value="ECO:0000266"/>
    <property type="project" value="RGD"/>
</dbReference>
<dbReference type="GO" id="GO:0003009">
    <property type="term" value="P:skeletal muscle contraction"/>
    <property type="evidence" value="ECO:0000270"/>
    <property type="project" value="RGD"/>
</dbReference>
<dbReference type="GO" id="GO:0033209">
    <property type="term" value="P:tumor necrosis factor-mediated signaling pathway"/>
    <property type="evidence" value="ECO:0000266"/>
    <property type="project" value="RGD"/>
</dbReference>
<dbReference type="CDD" id="cd14038">
    <property type="entry name" value="STKc_IKK_beta"/>
    <property type="match status" value="1"/>
</dbReference>
<dbReference type="CDD" id="cd17046">
    <property type="entry name" value="Ubl_IKKA_like"/>
    <property type="match status" value="1"/>
</dbReference>
<dbReference type="FunFam" id="3.10.20.90:FF:000087">
    <property type="entry name" value="Inhibitor of nuclear factor kappa B kinase subunit beta"/>
    <property type="match status" value="1"/>
</dbReference>
<dbReference type="FunFam" id="1.10.510.10:FF:000147">
    <property type="entry name" value="Inhibitor of nuclear factor kappa-B kinase subunit beta"/>
    <property type="match status" value="1"/>
</dbReference>
<dbReference type="FunFam" id="1.20.1270.250:FF:000002">
    <property type="entry name" value="Putative inhibitor of nuclear factor kappa-B kinase subunit beta"/>
    <property type="match status" value="1"/>
</dbReference>
<dbReference type="Gene3D" id="1.20.1270.250">
    <property type="match status" value="1"/>
</dbReference>
<dbReference type="Gene3D" id="6.10.250.2110">
    <property type="match status" value="1"/>
</dbReference>
<dbReference type="Gene3D" id="3.10.20.90">
    <property type="entry name" value="Phosphatidylinositol 3-kinase Catalytic Subunit, Chain A, domain 1"/>
    <property type="match status" value="1"/>
</dbReference>
<dbReference type="Gene3D" id="1.10.510.10">
    <property type="entry name" value="Transferase(Phosphotransferase) domain 1"/>
    <property type="match status" value="1"/>
</dbReference>
<dbReference type="InterPro" id="IPR041185">
    <property type="entry name" value="IKBKB_SDD"/>
</dbReference>
<dbReference type="InterPro" id="IPR046375">
    <property type="entry name" value="IKBKB_SDD_sf"/>
</dbReference>
<dbReference type="InterPro" id="IPR051180">
    <property type="entry name" value="IKK"/>
</dbReference>
<dbReference type="InterPro" id="IPR022007">
    <property type="entry name" value="IKKbetaNEMObind"/>
</dbReference>
<dbReference type="InterPro" id="IPR011009">
    <property type="entry name" value="Kinase-like_dom_sf"/>
</dbReference>
<dbReference type="InterPro" id="IPR000719">
    <property type="entry name" value="Prot_kinase_dom"/>
</dbReference>
<dbReference type="InterPro" id="IPR008271">
    <property type="entry name" value="Ser/Thr_kinase_AS"/>
</dbReference>
<dbReference type="PANTHER" id="PTHR22969">
    <property type="entry name" value="IKB KINASE"/>
    <property type="match status" value="1"/>
</dbReference>
<dbReference type="PANTHER" id="PTHR22969:SF7">
    <property type="entry name" value="INHIBITOR OF NUCLEAR FACTOR KAPPA-B KINASE SUBUNIT BETA"/>
    <property type="match status" value="1"/>
</dbReference>
<dbReference type="Pfam" id="PF18397">
    <property type="entry name" value="IKBKB_SDD"/>
    <property type="match status" value="1"/>
</dbReference>
<dbReference type="Pfam" id="PF12179">
    <property type="entry name" value="IKKbetaNEMObind"/>
    <property type="match status" value="1"/>
</dbReference>
<dbReference type="Pfam" id="PF00069">
    <property type="entry name" value="Pkinase"/>
    <property type="match status" value="1"/>
</dbReference>
<dbReference type="SMART" id="SM01239">
    <property type="entry name" value="IKKbetaNEMObind"/>
    <property type="match status" value="1"/>
</dbReference>
<dbReference type="SMART" id="SM00220">
    <property type="entry name" value="S_TKc"/>
    <property type="match status" value="1"/>
</dbReference>
<dbReference type="SUPFAM" id="SSF56112">
    <property type="entry name" value="Protein kinase-like (PK-like)"/>
    <property type="match status" value="1"/>
</dbReference>
<dbReference type="PROSITE" id="PS50011">
    <property type="entry name" value="PROTEIN_KINASE_DOM"/>
    <property type="match status" value="1"/>
</dbReference>
<dbReference type="PROSITE" id="PS00108">
    <property type="entry name" value="PROTEIN_KINASE_ST"/>
    <property type="match status" value="1"/>
</dbReference>
<feature type="chain" id="PRO_0000086015" description="Inhibitor of nuclear factor kappa-B kinase subunit beta">
    <location>
        <begin position="1"/>
        <end position="757"/>
    </location>
</feature>
<feature type="domain" description="Protein kinase" evidence="4">
    <location>
        <begin position="15"/>
        <end position="300"/>
    </location>
</feature>
<feature type="region of interest" description="Leucine-zipper">
    <location>
        <begin position="458"/>
        <end position="479"/>
    </location>
</feature>
<feature type="region of interest" description="Disordered" evidence="6">
    <location>
        <begin position="682"/>
        <end position="703"/>
    </location>
</feature>
<feature type="region of interest" description="NEMO-binding">
    <location>
        <begin position="737"/>
        <end position="742"/>
    </location>
</feature>
<feature type="active site" description="Proton acceptor" evidence="4 5">
    <location>
        <position position="145"/>
    </location>
</feature>
<feature type="binding site" evidence="4">
    <location>
        <begin position="21"/>
        <end position="29"/>
    </location>
    <ligand>
        <name>ATP</name>
        <dbReference type="ChEBI" id="CHEBI:30616"/>
    </ligand>
</feature>
<feature type="binding site" evidence="4">
    <location>
        <position position="44"/>
    </location>
    <ligand>
        <name>ATP</name>
        <dbReference type="ChEBI" id="CHEBI:30616"/>
    </ligand>
</feature>
<feature type="modified residue" description="Phosphoserine; by TBK1 and PKC/PRKCZ" evidence="2">
    <location>
        <position position="177"/>
    </location>
</feature>
<feature type="modified residue" description="S-nitrosocysteine" evidence="2">
    <location>
        <position position="179"/>
    </location>
</feature>
<feature type="modified residue" description="Phosphoserine; by TBK1, PKC/PRKCZ and PDPK1" evidence="2">
    <location>
        <position position="181"/>
    </location>
</feature>
<feature type="modified residue" description="Hydroxyproline" evidence="1">
    <location>
        <position position="191"/>
    </location>
</feature>
<feature type="modified residue" description="Phosphoserine; by autocatalysis" evidence="2">
    <location>
        <position position="670"/>
    </location>
</feature>
<feature type="modified residue" description="Phosphoserine" evidence="9">
    <location>
        <position position="672"/>
    </location>
</feature>
<feature type="modified residue" description="Phosphoserine; by autocatalysis" evidence="2">
    <location>
        <position position="675"/>
    </location>
</feature>
<feature type="modified residue" description="Phosphoserine; by autocatalysis" evidence="2">
    <location>
        <position position="682"/>
    </location>
</feature>
<feature type="modified residue" description="Phosphoserine; by autocatalysis" evidence="2">
    <location>
        <position position="689"/>
    </location>
</feature>
<feature type="modified residue" description="Phosphoserine; by autocatalysis" evidence="2">
    <location>
        <position position="692"/>
    </location>
</feature>
<feature type="modified residue" description="Phosphoserine; by autocatalysis" evidence="2">
    <location>
        <position position="697"/>
    </location>
</feature>
<feature type="modified residue" description="Phosphoserine; by autocatalysis" evidence="2">
    <location>
        <position position="705"/>
    </location>
</feature>
<feature type="modified residue" description="Phosphoserine; by autocatalysis" evidence="2">
    <location>
        <position position="733"/>
    </location>
</feature>
<feature type="modified residue" description="Phosphoserine; by autocatalysis" evidence="2">
    <location>
        <position position="740"/>
    </location>
</feature>
<feature type="cross-link" description="Glycyl lysine isopeptide (Lys-Gly) (interchain with G-Cter in ubiquitin)" evidence="2">
    <location>
        <position position="163"/>
    </location>
</feature>
<sequence length="757" mass="86866">MSWSPSLPTQTCGAWEMKERLGTGGFGNVIRWHNQVTGEQIAIKQCRQELSPKNRDRWCLEIQIMRRLNHPNVVAARDVPEGMQNLAPNDLPLLAMEYCQGGDLRRYLNQFENCCGLREGAILTLLSDIASALRYLHENRIIHRDLKPENIVLQQGEKRLIHKIIDLGYAKELDQGSLCTSFVGTLQYLAPELLEQQKYTVTVDYWSFGTLAFECITGFRPFLPNWQPVQWHSKVRQKSEVDIVVSEDLNGTVKFSSSSPFPNNLNSVLAERLEKWLQLMLTWQPRQRGVDPQYGPNGCFRALDDILNLKLVHILNMVTGTIHTYPVMEDESLQSLKTRIREDTGILETDQELLQEAGLVLLPDKPATQCISDSKTNEGLTLDMDLVFLFDNSKMSYETQITPRPQPESVSCVLQEPKRNLSFFQMRKVWGQVWHSIQTLKEDCNRLQQGQRAAMMNLLRNNSCLSKMKNAMASTAQQLKAKLDFFKTSIQIDLEKYREQTEFGITSDKLLLAWREMEQAVEQCGRENDVKVLVERMMALQTDIVDLQRSPMGRKQGGTLDDLEEQARELYRRLREKPRDQRTEGDSQDMVRLLLQAIQSFEKKVRVIYSQLSKTVVCKQKALELLPKVEEVVRLMNEDEKTVVRLQEKRQKELWNLLKIACSKVRGPVSGSPDSMNVSRLSHPGHLMSQPSSACDSLPDSDKKSEELVAEAHALCSRLESALQDTVKQQDRSFTTLDWSWLQMEDEERCGLEQACD</sequence>
<organism>
    <name type="scientific">Rattus norvegicus</name>
    <name type="common">Rat</name>
    <dbReference type="NCBI Taxonomy" id="10116"/>
    <lineage>
        <taxon>Eukaryota</taxon>
        <taxon>Metazoa</taxon>
        <taxon>Chordata</taxon>
        <taxon>Craniata</taxon>
        <taxon>Vertebrata</taxon>
        <taxon>Euteleostomi</taxon>
        <taxon>Mammalia</taxon>
        <taxon>Eutheria</taxon>
        <taxon>Euarchontoglires</taxon>
        <taxon>Glires</taxon>
        <taxon>Rodentia</taxon>
        <taxon>Myomorpha</taxon>
        <taxon>Muroidea</taxon>
        <taxon>Muridae</taxon>
        <taxon>Murinae</taxon>
        <taxon>Rattus</taxon>
    </lineage>
</organism>
<reference key="1">
    <citation type="submission" date="1998-12" db="EMBL/GenBank/DDBJ databases">
        <title>IKK beta in megakaryocyte differentiation.</title>
        <authorList>
            <person name="Zhang Y."/>
            <person name="Sun S."/>
            <person name="Ravid K."/>
        </authorList>
    </citation>
    <scope>NUCLEOTIDE SEQUENCE [MRNA]</scope>
</reference>
<reference key="2">
    <citation type="journal article" date="1998" name="Mol. Cell. Biol.">
        <title>Coordinate regulation of IkappaB kinases by mitogen-activated protein kinase kinase kinase 1 and NF-kappaB-inducing kinase.</title>
        <authorList>
            <person name="Nemoto S."/>
            <person name="DiDonato J.A."/>
            <person name="Lin A."/>
        </authorList>
    </citation>
    <scope>IKK PHOSPHORYLATION</scope>
</reference>
<reference key="3">
    <citation type="journal article" date="2005" name="J. Biol. Chem.">
        <title>The p62 scaffold regulates nerve growth factor-induced NF-kappaB activation by influencing TRAF6 polyubiquitination.</title>
        <authorList>
            <person name="Wooten M.W."/>
            <person name="Geetha T."/>
            <person name="Seibenhener M.L."/>
            <person name="Babu J.R."/>
            <person name="Diaz-Meco M.T."/>
            <person name="Moscat J."/>
        </authorList>
    </citation>
    <scope>INTERACTION WITH SQSTM1; PRKCI AND TRAF6</scope>
</reference>
<reference key="4">
    <citation type="journal article" date="2000" name="Am. J. Physiol.">
        <title>The I kappa B/NF-kappa B system: a key determinant of mucosal inflammation and protection.</title>
        <authorList>
            <person name="Jobin C."/>
            <person name="Sartor R.B."/>
        </authorList>
    </citation>
    <scope>REVIEW</scope>
</reference>
<reference key="5">
    <citation type="journal article" date="2012" name="Nat. Commun.">
        <title>Quantitative maps of protein phosphorylation sites across 14 different rat organs and tissues.</title>
        <authorList>
            <person name="Lundby A."/>
            <person name="Secher A."/>
            <person name="Lage K."/>
            <person name="Nordsborg N.B."/>
            <person name="Dmytriyev A."/>
            <person name="Lundby C."/>
            <person name="Olsen J.V."/>
        </authorList>
    </citation>
    <scope>PHOSPHORYLATION [LARGE SCALE ANALYSIS] AT SER-672</scope>
    <scope>IDENTIFICATION BY MASS SPECTROMETRY [LARGE SCALE ANALYSIS]</scope>
</reference>
<reference key="6">
    <citation type="journal article" date="2013" name="Mol. Cell. Biol.">
        <title>A-kinase-anchoring protein-Lbc anchors IkappaB kinase beta to support interleukin-6-mediated cardiomyocyte hypertrophy.</title>
        <authorList>
            <person name="del Vescovo C.D."/>
            <person name="Cotecchia S."/>
            <person name="Diviani D."/>
        </authorList>
    </citation>
    <scope>INTERACTION WITH AKAP13</scope>
</reference>
<evidence type="ECO:0000250" key="1"/>
<evidence type="ECO:0000250" key="2">
    <source>
        <dbReference type="UniProtKB" id="O14920"/>
    </source>
</evidence>
<evidence type="ECO:0000250" key="3">
    <source>
        <dbReference type="UniProtKB" id="O88351"/>
    </source>
</evidence>
<evidence type="ECO:0000255" key="4">
    <source>
        <dbReference type="PROSITE-ProRule" id="PRU00159"/>
    </source>
</evidence>
<evidence type="ECO:0000255" key="5">
    <source>
        <dbReference type="PROSITE-ProRule" id="PRU10027"/>
    </source>
</evidence>
<evidence type="ECO:0000256" key="6">
    <source>
        <dbReference type="SAM" id="MobiDB-lite"/>
    </source>
</evidence>
<evidence type="ECO:0000269" key="7">
    <source>
    </source>
</evidence>
<evidence type="ECO:0000269" key="8">
    <source>
    </source>
</evidence>
<evidence type="ECO:0007744" key="9">
    <source>
    </source>
</evidence>
<keyword id="KW-0067">ATP-binding</keyword>
<keyword id="KW-0963">Cytoplasm</keyword>
<keyword id="KW-0379">Hydroxylation</keyword>
<keyword id="KW-1017">Isopeptide bond</keyword>
<keyword id="KW-0418">Kinase</keyword>
<keyword id="KW-0472">Membrane</keyword>
<keyword id="KW-0547">Nucleotide-binding</keyword>
<keyword id="KW-0539">Nucleus</keyword>
<keyword id="KW-0597">Phosphoprotein</keyword>
<keyword id="KW-1185">Reference proteome</keyword>
<keyword id="KW-0702">S-nitrosylation</keyword>
<keyword id="KW-0723">Serine/threonine-protein kinase</keyword>
<keyword id="KW-0808">Transferase</keyword>
<keyword id="KW-0832">Ubl conjugation</keyword>
<proteinExistence type="evidence at protein level"/>
<gene>
    <name type="primary">Ikbkb</name>
    <name type="synonym">Ikkb</name>
</gene>
<name>IKKB_RAT</name>
<protein>
    <recommendedName>
        <fullName>Inhibitor of nuclear factor kappa-B kinase subunit beta</fullName>
        <shortName>I-kappa-B-kinase beta</shortName>
        <shortName>IKK-B</shortName>
        <shortName>IKK-beta</shortName>
        <shortName>IkBKB</shortName>
        <ecNumber>2.7.11.10</ecNumber>
    </recommendedName>
    <alternativeName>
        <fullName>I-kappa-B kinase 2</fullName>
        <shortName>IKK2</shortName>
    </alternativeName>
    <alternativeName>
        <fullName>Nuclear factor NF-kappa-B inhibitor kinase beta</fullName>
        <shortName>NFKBIKB</shortName>
    </alternativeName>
    <alternativeName>
        <fullName>Serine/threonine protein kinase IKBKB</fullName>
        <ecNumber evidence="2">2.7.11.1</ecNumber>
    </alternativeName>
</protein>